<dbReference type="EC" id="6.3.5.2" evidence="1"/>
<dbReference type="EMBL" id="AP008232">
    <property type="protein sequence ID" value="BAE75023.1"/>
    <property type="molecule type" value="Genomic_DNA"/>
</dbReference>
<dbReference type="RefSeq" id="WP_011411572.1">
    <property type="nucleotide sequence ID" value="NC_007712.1"/>
</dbReference>
<dbReference type="SMR" id="Q2NS52"/>
<dbReference type="STRING" id="343509.SG1748"/>
<dbReference type="KEGG" id="sgl:SG1748"/>
<dbReference type="eggNOG" id="COG0518">
    <property type="taxonomic scope" value="Bacteria"/>
</dbReference>
<dbReference type="eggNOG" id="COG0519">
    <property type="taxonomic scope" value="Bacteria"/>
</dbReference>
<dbReference type="HOGENOM" id="CLU_014340_0_5_6"/>
<dbReference type="OrthoDB" id="9802219at2"/>
<dbReference type="BioCyc" id="SGLO343509:SGP1_RS15925-MONOMER"/>
<dbReference type="UniPathway" id="UPA00189">
    <property type="reaction ID" value="UER00296"/>
</dbReference>
<dbReference type="Proteomes" id="UP000001932">
    <property type="component" value="Chromosome"/>
</dbReference>
<dbReference type="GO" id="GO:0005829">
    <property type="term" value="C:cytosol"/>
    <property type="evidence" value="ECO:0007669"/>
    <property type="project" value="TreeGrafter"/>
</dbReference>
<dbReference type="GO" id="GO:0005524">
    <property type="term" value="F:ATP binding"/>
    <property type="evidence" value="ECO:0007669"/>
    <property type="project" value="UniProtKB-UniRule"/>
</dbReference>
<dbReference type="GO" id="GO:0003921">
    <property type="term" value="F:GMP synthase activity"/>
    <property type="evidence" value="ECO:0007669"/>
    <property type="project" value="InterPro"/>
</dbReference>
<dbReference type="CDD" id="cd01742">
    <property type="entry name" value="GATase1_GMP_Synthase"/>
    <property type="match status" value="1"/>
</dbReference>
<dbReference type="CDD" id="cd01997">
    <property type="entry name" value="GMP_synthase_C"/>
    <property type="match status" value="1"/>
</dbReference>
<dbReference type="FunFam" id="3.30.300.10:FF:000002">
    <property type="entry name" value="GMP synthase [glutamine-hydrolyzing]"/>
    <property type="match status" value="1"/>
</dbReference>
<dbReference type="FunFam" id="3.40.50.620:FF:000001">
    <property type="entry name" value="GMP synthase [glutamine-hydrolyzing]"/>
    <property type="match status" value="1"/>
</dbReference>
<dbReference type="FunFam" id="3.40.50.880:FF:000001">
    <property type="entry name" value="GMP synthase [glutamine-hydrolyzing]"/>
    <property type="match status" value="1"/>
</dbReference>
<dbReference type="Gene3D" id="3.30.300.10">
    <property type="match status" value="1"/>
</dbReference>
<dbReference type="Gene3D" id="3.40.50.880">
    <property type="match status" value="1"/>
</dbReference>
<dbReference type="Gene3D" id="3.40.50.620">
    <property type="entry name" value="HUPs"/>
    <property type="match status" value="1"/>
</dbReference>
<dbReference type="HAMAP" id="MF_00344">
    <property type="entry name" value="GMP_synthase"/>
    <property type="match status" value="1"/>
</dbReference>
<dbReference type="InterPro" id="IPR029062">
    <property type="entry name" value="Class_I_gatase-like"/>
</dbReference>
<dbReference type="InterPro" id="IPR017926">
    <property type="entry name" value="GATASE"/>
</dbReference>
<dbReference type="InterPro" id="IPR001674">
    <property type="entry name" value="GMP_synth_C"/>
</dbReference>
<dbReference type="InterPro" id="IPR004739">
    <property type="entry name" value="GMP_synth_GATase"/>
</dbReference>
<dbReference type="InterPro" id="IPR022955">
    <property type="entry name" value="GMP_synthase"/>
</dbReference>
<dbReference type="InterPro" id="IPR025777">
    <property type="entry name" value="GMPS_ATP_PPase_dom"/>
</dbReference>
<dbReference type="InterPro" id="IPR022310">
    <property type="entry name" value="NAD/GMP_synthase"/>
</dbReference>
<dbReference type="InterPro" id="IPR014729">
    <property type="entry name" value="Rossmann-like_a/b/a_fold"/>
</dbReference>
<dbReference type="NCBIfam" id="TIGR00884">
    <property type="entry name" value="guaA_Cterm"/>
    <property type="match status" value="1"/>
</dbReference>
<dbReference type="NCBIfam" id="TIGR00888">
    <property type="entry name" value="guaA_Nterm"/>
    <property type="match status" value="1"/>
</dbReference>
<dbReference type="NCBIfam" id="NF000848">
    <property type="entry name" value="PRK00074.1"/>
    <property type="match status" value="1"/>
</dbReference>
<dbReference type="PANTHER" id="PTHR11922:SF2">
    <property type="entry name" value="GMP SYNTHASE [GLUTAMINE-HYDROLYZING]"/>
    <property type="match status" value="1"/>
</dbReference>
<dbReference type="PANTHER" id="PTHR11922">
    <property type="entry name" value="GMP SYNTHASE-RELATED"/>
    <property type="match status" value="1"/>
</dbReference>
<dbReference type="Pfam" id="PF00117">
    <property type="entry name" value="GATase"/>
    <property type="match status" value="1"/>
</dbReference>
<dbReference type="Pfam" id="PF00958">
    <property type="entry name" value="GMP_synt_C"/>
    <property type="match status" value="1"/>
</dbReference>
<dbReference type="Pfam" id="PF02540">
    <property type="entry name" value="NAD_synthase"/>
    <property type="match status" value="1"/>
</dbReference>
<dbReference type="PRINTS" id="PR00097">
    <property type="entry name" value="ANTSNTHASEII"/>
</dbReference>
<dbReference type="PRINTS" id="PR00099">
    <property type="entry name" value="CPSGATASE"/>
</dbReference>
<dbReference type="PRINTS" id="PR00096">
    <property type="entry name" value="GATASE"/>
</dbReference>
<dbReference type="SUPFAM" id="SSF52402">
    <property type="entry name" value="Adenine nucleotide alpha hydrolases-like"/>
    <property type="match status" value="1"/>
</dbReference>
<dbReference type="SUPFAM" id="SSF52317">
    <property type="entry name" value="Class I glutamine amidotransferase-like"/>
    <property type="match status" value="1"/>
</dbReference>
<dbReference type="SUPFAM" id="SSF54810">
    <property type="entry name" value="GMP synthetase C-terminal dimerisation domain"/>
    <property type="match status" value="1"/>
</dbReference>
<dbReference type="PROSITE" id="PS51273">
    <property type="entry name" value="GATASE_TYPE_1"/>
    <property type="match status" value="1"/>
</dbReference>
<dbReference type="PROSITE" id="PS51553">
    <property type="entry name" value="GMPS_ATP_PPASE"/>
    <property type="match status" value="1"/>
</dbReference>
<name>GUAA_SODGM</name>
<reference key="1">
    <citation type="journal article" date="2006" name="Genome Res.">
        <title>Massive genome erosion and functional adaptations provide insights into the symbiotic lifestyle of Sodalis glossinidius in the tsetse host.</title>
        <authorList>
            <person name="Toh H."/>
            <person name="Weiss B.L."/>
            <person name="Perkin S.A.H."/>
            <person name="Yamashita A."/>
            <person name="Oshima K."/>
            <person name="Hattori M."/>
            <person name="Aksoy S."/>
        </authorList>
    </citation>
    <scope>NUCLEOTIDE SEQUENCE [LARGE SCALE GENOMIC DNA]</scope>
    <source>
        <strain>morsitans</strain>
    </source>
</reference>
<proteinExistence type="inferred from homology"/>
<evidence type="ECO:0000255" key="1">
    <source>
        <dbReference type="HAMAP-Rule" id="MF_00344"/>
    </source>
</evidence>
<sequence length="525" mass="58604">MTENIHKHRILILDFGSQYTQLVARRVRELGVYCELWAWDVTEAQIREFNPSGIILSGGPESTTEQDSPRAPDYVFQAGVPVLGVCYGMQTMAMQLGGKVQGSTQREFGYAQVEVLTDSLLVRDIQDDIGTGGAPLLDVWMSHGDKVTAIPADFVTVASTETCHFAIMANEEKRFYGVQFHPEVTHTRQGQRMLERFVLDICRCTPLWTPAKIIEDAVARIREQVGNDRVILGLSGGVDSSVTAMLLHRAIGERLTCVFVDNGLLRLNEASQVMEMFGDHYGLNIIAVPAEDRFLSALAGIDDPETKRKTIGRVFVEVFDEQALSLSDVKWLAQGTIYPDVIESAASATGKAHVIKSHHNVGGLPKEMKMGLVEPLKELFKDEVRKIGLELGLPYDMLYRHPFPGPGLGVRVLGEVKKEYCDLLRRADAIFIEELYKADLYNKVSQAFTVFLPVRSVGVMGDGRKYDWVVSLRAVETIDFMTAHWAHLPYDFLGRVSNRIINEIDGISRVVYDISGKPPATIEWE</sequence>
<comment type="function">
    <text evidence="1">Catalyzes the synthesis of GMP from XMP.</text>
</comment>
<comment type="catalytic activity">
    <reaction evidence="1">
        <text>XMP + L-glutamine + ATP + H2O = GMP + L-glutamate + AMP + diphosphate + 2 H(+)</text>
        <dbReference type="Rhea" id="RHEA:11680"/>
        <dbReference type="ChEBI" id="CHEBI:15377"/>
        <dbReference type="ChEBI" id="CHEBI:15378"/>
        <dbReference type="ChEBI" id="CHEBI:29985"/>
        <dbReference type="ChEBI" id="CHEBI:30616"/>
        <dbReference type="ChEBI" id="CHEBI:33019"/>
        <dbReference type="ChEBI" id="CHEBI:57464"/>
        <dbReference type="ChEBI" id="CHEBI:58115"/>
        <dbReference type="ChEBI" id="CHEBI:58359"/>
        <dbReference type="ChEBI" id="CHEBI:456215"/>
        <dbReference type="EC" id="6.3.5.2"/>
    </reaction>
</comment>
<comment type="pathway">
    <text evidence="1">Purine metabolism; GMP biosynthesis; GMP from XMP (L-Gln route): step 1/1.</text>
</comment>
<comment type="subunit">
    <text evidence="1">Homodimer.</text>
</comment>
<organism>
    <name type="scientific">Sodalis glossinidius (strain morsitans)</name>
    <dbReference type="NCBI Taxonomy" id="343509"/>
    <lineage>
        <taxon>Bacteria</taxon>
        <taxon>Pseudomonadati</taxon>
        <taxon>Pseudomonadota</taxon>
        <taxon>Gammaproteobacteria</taxon>
        <taxon>Enterobacterales</taxon>
        <taxon>Bruguierivoracaceae</taxon>
        <taxon>Sodalis</taxon>
    </lineage>
</organism>
<protein>
    <recommendedName>
        <fullName evidence="1">GMP synthase [glutamine-hydrolyzing]</fullName>
        <ecNumber evidence="1">6.3.5.2</ecNumber>
    </recommendedName>
    <alternativeName>
        <fullName evidence="1">GMP synthetase</fullName>
    </alternativeName>
    <alternativeName>
        <fullName evidence="1">Glutamine amidotransferase</fullName>
    </alternativeName>
</protein>
<gene>
    <name evidence="1" type="primary">guaA</name>
    <name type="ordered locus">SG1748</name>
</gene>
<accession>Q2NS52</accession>
<keyword id="KW-0067">ATP-binding</keyword>
<keyword id="KW-0315">Glutamine amidotransferase</keyword>
<keyword id="KW-0332">GMP biosynthesis</keyword>
<keyword id="KW-0436">Ligase</keyword>
<keyword id="KW-0547">Nucleotide-binding</keyword>
<keyword id="KW-0658">Purine biosynthesis</keyword>
<feature type="chain" id="PRO_1000120418" description="GMP synthase [glutamine-hydrolyzing]">
    <location>
        <begin position="1"/>
        <end position="525"/>
    </location>
</feature>
<feature type="domain" description="Glutamine amidotransferase type-1" evidence="1">
    <location>
        <begin position="9"/>
        <end position="207"/>
    </location>
</feature>
<feature type="domain" description="GMPS ATP-PPase" evidence="1">
    <location>
        <begin position="208"/>
        <end position="400"/>
    </location>
</feature>
<feature type="active site" description="Nucleophile" evidence="1">
    <location>
        <position position="86"/>
    </location>
</feature>
<feature type="active site" evidence="1">
    <location>
        <position position="181"/>
    </location>
</feature>
<feature type="active site" evidence="1">
    <location>
        <position position="183"/>
    </location>
</feature>
<feature type="binding site" evidence="1">
    <location>
        <begin position="235"/>
        <end position="241"/>
    </location>
    <ligand>
        <name>ATP</name>
        <dbReference type="ChEBI" id="CHEBI:30616"/>
    </ligand>
</feature>